<name>NS1_I96A0</name>
<comment type="function">
    <text evidence="1">Inhibits post-transcriptional processing of cellular pre-mRNA, by binding and inhibiting two cellular proteins that are required for the 3'-end processing of cellular pre-mRNAs: the 30 kDa cleavage and polyadenylation specificity factor/CPSF4 and the poly(A)-binding protein 2/PABPN1. In turn, unprocessed 3' end pre-mRNAs accumulate in the host nucleus and are no longer exported to the cytoplasm. Cellular protein synthesis is thereby shut off very early after virus infection. Viral protein synthesis is not affected by the inhibition of the cellular 3' end processing machinery because the poly(A) tails of viral mRNAs are produced by the viral polymerase through a stuttering mechanism. Prevents the establishment of the cellular antiviral state by inhibiting TRIM25-mediated RIGI ubiquitination, which normally triggers the antiviral transduction signal that leads to the activation of type I IFN genes by transcription factors IRF3 and IRF7. Also binds poly(A) and U6 snRNA. Inhibits the integrated stress response (ISR) in the infected cell by blocking dsRNA binding by EIF2AK2/PKR and further phosphorylation of EIF2S1/EIF-2ALPHA. Stress granule formation is thus inhibited, which allows protein synthesis and viral replication.</text>
</comment>
<comment type="subunit">
    <text evidence="1">Homodimer. Interacts with host TRIM25 (via coiled coil); this interaction specifically inhibits TRIM25 multimerization and TRIM25-mediated RIGI CARD ubiquitination. Interacts with human EIF2AK2/PKR, CPSF4, IVNS1ABP and PABPN1.</text>
</comment>
<comment type="subcellular location">
    <subcellularLocation>
        <location evidence="1">Host nucleus</location>
    </subcellularLocation>
    <subcellularLocation>
        <location evidence="1">Host cytoplasm</location>
    </subcellularLocation>
    <text evidence="1">In uninfected, transfected cells, NS1 is localized in the nucleus. Only in virus infected cells, the nuclear export signal is unveiled, presumably by a viral protein, and a fraction of NS1 is exported in the cytoplasm.</text>
</comment>
<comment type="alternative products">
    <event type="alternative splicing"/>
    <isoform>
        <id>Q9Q0L6-1</id>
        <name>NS1</name>
        <sequence type="displayed"/>
    </isoform>
    <isoform>
        <id>Q9Q0L7-1</id>
        <name>NEP</name>
        <name>NS2</name>
        <sequence type="external"/>
    </isoform>
</comment>
<comment type="domain">
    <text evidence="1">The dsRNA-binding region is required for suppression of RNA silencing.</text>
</comment>
<comment type="PTM">
    <text evidence="1">Upon interferon induction, ISGylated via host HERC5; this results in the impairment of NS1 interaction with RNA targets due to its inability to form homodimers and to interact with host EIF2AK2/PKR.</text>
</comment>
<comment type="similarity">
    <text evidence="1">Belongs to the influenza A viruses NS1 family.</text>
</comment>
<organismHost>
    <name type="scientific">Aves</name>
    <dbReference type="NCBI Taxonomy" id="8782"/>
</organismHost>
<organismHost>
    <name type="scientific">Felis catus</name>
    <name type="common">Cat</name>
    <name type="synonym">Felis silvestris catus</name>
    <dbReference type="NCBI Taxonomy" id="9685"/>
</organismHost>
<organismHost>
    <name type="scientific">Homo sapiens</name>
    <name type="common">Human</name>
    <dbReference type="NCBI Taxonomy" id="9606"/>
</organismHost>
<organismHost>
    <name type="scientific">Panthera pardus</name>
    <name type="common">Leopard</name>
    <name type="synonym">Felis pardus</name>
    <dbReference type="NCBI Taxonomy" id="9691"/>
</organismHost>
<organismHost>
    <name type="scientific">Panthera tigris</name>
    <name type="common">Tiger</name>
    <dbReference type="NCBI Taxonomy" id="9694"/>
</organismHost>
<organismHost>
    <name type="scientific">Sus scrofa</name>
    <name type="common">Pig</name>
    <dbReference type="NCBI Taxonomy" id="9823"/>
</organismHost>
<keyword id="KW-0025">Alternative splicing</keyword>
<keyword id="KW-1262">Eukaryotic host gene expression shutoff by virus</keyword>
<keyword id="KW-1035">Host cytoplasm</keyword>
<keyword id="KW-1190">Host gene expression shutoff by virus</keyword>
<keyword id="KW-1192">Host mRNA suppression by virus</keyword>
<keyword id="KW-1048">Host nucleus</keyword>
<keyword id="KW-0945">Host-virus interaction</keyword>
<keyword id="KW-1090">Inhibition of host innate immune response by virus</keyword>
<keyword id="KW-1114">Inhibition of host interferon signaling pathway by virus</keyword>
<keyword id="KW-1102">Inhibition of host PKR by virus</keyword>
<keyword id="KW-1103">Inhibition of host pre-mRNA processing by virus</keyword>
<keyword id="KW-1088">Inhibition of host RIG-I by virus</keyword>
<keyword id="KW-1113">Inhibition of host RLR pathway by virus</keyword>
<keyword id="KW-0922">Interferon antiviral system evasion</keyword>
<keyword id="KW-1185">Reference proteome</keyword>
<keyword id="KW-0694">RNA-binding</keyword>
<keyword id="KW-0832">Ubl conjugation</keyword>
<keyword id="KW-0899">Viral immunoevasion</keyword>
<dbReference type="EMBL" id="AF144307">
    <property type="protein sequence ID" value="AAD51930.1"/>
    <property type="molecule type" value="Genomic_RNA"/>
</dbReference>
<dbReference type="RefSeq" id="YP_308673.1">
    <molecule id="Q9Q0L6-1"/>
    <property type="nucleotide sequence ID" value="NC_007364.1"/>
</dbReference>
<dbReference type="SMR" id="Q9Q0L6"/>
<dbReference type="IntAct" id="Q9Q0L6">
    <property type="interactions" value="1"/>
</dbReference>
<dbReference type="KEGG" id="vg:8656648"/>
<dbReference type="OrthoDB" id="8721at10239"/>
<dbReference type="Proteomes" id="UP000131152">
    <property type="component" value="Genome"/>
</dbReference>
<dbReference type="GO" id="GO:0030430">
    <property type="term" value="C:host cell cytoplasm"/>
    <property type="evidence" value="ECO:0007669"/>
    <property type="project" value="UniProtKB-SubCell"/>
</dbReference>
<dbReference type="GO" id="GO:0042025">
    <property type="term" value="C:host cell nucleus"/>
    <property type="evidence" value="ECO:0007669"/>
    <property type="project" value="UniProtKB-SubCell"/>
</dbReference>
<dbReference type="GO" id="GO:0030291">
    <property type="term" value="F:protein serine/threonine kinase inhibitor activity"/>
    <property type="evidence" value="ECO:0007669"/>
    <property type="project" value="UniProtKB-KW"/>
</dbReference>
<dbReference type="GO" id="GO:0003723">
    <property type="term" value="F:RNA binding"/>
    <property type="evidence" value="ECO:0007669"/>
    <property type="project" value="UniProtKB-KW"/>
</dbReference>
<dbReference type="GO" id="GO:0039540">
    <property type="term" value="P:symbiont-mediated suppression of host cytoplasmic pattern recognition receptor signaling pathway via inhibition of RIG-I activity"/>
    <property type="evidence" value="ECO:0007669"/>
    <property type="project" value="UniProtKB-KW"/>
</dbReference>
<dbReference type="GO" id="GO:0039657">
    <property type="term" value="P:symbiont-mediated suppression of host gene expression"/>
    <property type="evidence" value="ECO:0007669"/>
    <property type="project" value="UniProtKB-KW"/>
</dbReference>
<dbReference type="GO" id="GO:0039524">
    <property type="term" value="P:symbiont-mediated suppression of host mRNA processing"/>
    <property type="evidence" value="ECO:0007669"/>
    <property type="project" value="UniProtKB-KW"/>
</dbReference>
<dbReference type="GO" id="GO:0039580">
    <property type="term" value="P:symbiont-mediated suppression of host PKR/eIFalpha signaling"/>
    <property type="evidence" value="ECO:0007669"/>
    <property type="project" value="UniProtKB-KW"/>
</dbReference>
<dbReference type="GO" id="GO:0039502">
    <property type="term" value="P:symbiont-mediated suppression of host type I interferon-mediated signaling pathway"/>
    <property type="evidence" value="ECO:0007669"/>
    <property type="project" value="UniProtKB-KW"/>
</dbReference>
<dbReference type="Gene3D" id="3.30.420.330">
    <property type="entry name" value="Influenza virus non-structural protein, effector domain"/>
    <property type="match status" value="1"/>
</dbReference>
<dbReference type="Gene3D" id="1.10.287.10">
    <property type="entry name" value="S15/NS1, RNA-binding"/>
    <property type="match status" value="1"/>
</dbReference>
<dbReference type="HAMAP" id="MF_04066">
    <property type="entry name" value="INFV_NS1"/>
    <property type="match status" value="1"/>
</dbReference>
<dbReference type="InterPro" id="IPR004208">
    <property type="entry name" value="NS1"/>
</dbReference>
<dbReference type="InterPro" id="IPR000256">
    <property type="entry name" value="NS1A"/>
</dbReference>
<dbReference type="InterPro" id="IPR038064">
    <property type="entry name" value="NS1A_effect_dom-like_sf"/>
</dbReference>
<dbReference type="InterPro" id="IPR009068">
    <property type="entry name" value="uS15_NS1_RNA-bd_sf"/>
</dbReference>
<dbReference type="Pfam" id="PF00600">
    <property type="entry name" value="Flu_NS1"/>
    <property type="match status" value="1"/>
</dbReference>
<dbReference type="SUPFAM" id="SSF143021">
    <property type="entry name" value="Ns1 effector domain-like"/>
    <property type="match status" value="1"/>
</dbReference>
<dbReference type="SUPFAM" id="SSF47060">
    <property type="entry name" value="S15/NS1 RNA-binding domain"/>
    <property type="match status" value="1"/>
</dbReference>
<organism>
    <name type="scientific">Influenza A virus (strain A/Goose/Guangdong/1/1996 H5N1 genotype Gs/Gd)</name>
    <dbReference type="NCBI Taxonomy" id="93838"/>
    <lineage>
        <taxon>Viruses</taxon>
        <taxon>Riboviria</taxon>
        <taxon>Orthornavirae</taxon>
        <taxon>Negarnaviricota</taxon>
        <taxon>Polyploviricotina</taxon>
        <taxon>Insthoviricetes</taxon>
        <taxon>Articulavirales</taxon>
        <taxon>Orthomyxoviridae</taxon>
        <taxon>Alphainfluenzavirus</taxon>
        <taxon>Alphainfluenzavirus influenzae</taxon>
        <taxon>Influenza A virus</taxon>
    </lineage>
</organism>
<evidence type="ECO:0000255" key="1">
    <source>
        <dbReference type="HAMAP-Rule" id="MF_04066"/>
    </source>
</evidence>
<sequence length="230" mass="26095">MDSNTITSFQVDCYLWHIRKLLSMRDMCDAPFDDRLRRDQKALKGRGSTLGLDLRVATMEGKKIVEDILKSETNENLKIAIASSPAPRYITDMSIEEMSREWYMLMPRQKITGGLMVKMDQAIMDKRIILKANFSVLFDQLETLVSLRAFTESGAIVAEIFPIPSVPGHFTEDVKNAIGILIGGLEWNDNSIRASENIQRFAWGIHDENGGPSLPPKQKRYMAKRVESEV</sequence>
<gene>
    <name evidence="1" type="primary">NS</name>
</gene>
<proteinExistence type="inferred from homology"/>
<protein>
    <recommendedName>
        <fullName evidence="1">Non-structural protein 1</fullName>
        <shortName evidence="1">NS1</shortName>
    </recommendedName>
    <alternativeName>
        <fullName evidence="1">NS1A</fullName>
    </alternativeName>
</protein>
<reference key="1">
    <citation type="journal article" date="1999" name="Virology">
        <title>Genetic characterization of the pathogenic influenza A/Goose/Guangdong/1/96 (H5N1) virus: similarity of its hemagglutinin gene to those of H5N1 viruses from the 1997 outbreaks in Hong Kong.</title>
        <authorList>
            <person name="Xu X."/>
            <person name="Subbarao K."/>
            <person name="Cox N.J."/>
            <person name="Guo Y."/>
        </authorList>
    </citation>
    <scope>NUCLEOTIDE SEQUENCE [GENOMIC RNA]</scope>
</reference>
<accession>Q9Q0L6</accession>
<feature type="chain" id="PRO_0000324282" description="Non-structural protein 1">
    <location>
        <begin position="1"/>
        <end position="230"/>
    </location>
</feature>
<feature type="region of interest" description="RNA-binding and homodimerization" evidence="1">
    <location>
        <begin position="1"/>
        <end position="73"/>
    </location>
</feature>
<feature type="region of interest" description="CPSF4-binding" evidence="1">
    <location>
        <begin position="180"/>
        <end position="215"/>
    </location>
</feature>
<feature type="region of interest" description="PABPN1-binding" evidence="1">
    <location>
        <begin position="223"/>
        <end position="230"/>
    </location>
</feature>
<feature type="short sequence motif" description="Nuclear localization signal" evidence="1">
    <location>
        <begin position="34"/>
        <end position="38"/>
    </location>
</feature>
<feature type="short sequence motif" description="Nuclear export signal" evidence="1">
    <location>
        <begin position="137"/>
        <end position="146"/>
    </location>
</feature>